<dbReference type="EMBL" id="AAFI02000046">
    <property type="protein sequence ID" value="EAL66340.1"/>
    <property type="molecule type" value="Genomic_DNA"/>
</dbReference>
<dbReference type="RefSeq" id="XP_640319.1">
    <property type="nucleotide sequence ID" value="XM_635227.1"/>
</dbReference>
<dbReference type="GlyGen" id="Q54SR6">
    <property type="glycosylation" value="2 sites"/>
</dbReference>
<dbReference type="PaxDb" id="44689-DDB0205306"/>
<dbReference type="EnsemblProtists" id="EAL66340">
    <property type="protein sequence ID" value="EAL66340"/>
    <property type="gene ID" value="DDB_G0282269"/>
</dbReference>
<dbReference type="GeneID" id="8623495"/>
<dbReference type="KEGG" id="ddi:DDB_G0282269"/>
<dbReference type="dictyBase" id="DDB_G0282269"/>
<dbReference type="VEuPathDB" id="AmoebaDB:DDB_G0282269"/>
<dbReference type="HOGENOM" id="CLU_1035983_0_0_1"/>
<dbReference type="InParanoid" id="Q54SR6"/>
<dbReference type="PRO" id="PR:Q54SR6"/>
<dbReference type="Proteomes" id="UP000002195">
    <property type="component" value="Chromosome 3"/>
</dbReference>
<proteinExistence type="predicted"/>
<organism>
    <name type="scientific">Dictyostelium discoideum</name>
    <name type="common">Social amoeba</name>
    <dbReference type="NCBI Taxonomy" id="44689"/>
    <lineage>
        <taxon>Eukaryota</taxon>
        <taxon>Amoebozoa</taxon>
        <taxon>Evosea</taxon>
        <taxon>Eumycetozoa</taxon>
        <taxon>Dictyostelia</taxon>
        <taxon>Dictyosteliales</taxon>
        <taxon>Dictyosteliaceae</taxon>
        <taxon>Dictyostelium</taxon>
    </lineage>
</organism>
<accession>Q54SR6</accession>
<gene>
    <name type="ORF">DDB_G0282269</name>
</gene>
<keyword id="KW-1185">Reference proteome</keyword>
<evidence type="ECO:0000256" key="1">
    <source>
        <dbReference type="SAM" id="MobiDB-lite"/>
    </source>
</evidence>
<sequence>MTDVPSKPPQTTPPPKPKSRAPTTIFSSPPQLPDRSSLNISHTASTPTLTPTPLQQQQIHTDGNSQQPKSSPPPLPERQSFSNSPNRQTQSFIQKPALPPRDSQYNTISGSTVFKSNNNINNNNNDSHIITNGNASTSFIQGNRVTRVLNTNKSEPILQQPQQSHSPQQQQQQHTPNHQQPLSPQQQKDLAQKRSTMPLPPRPNKNRPLPTPISPESHPLTINEENSITEDKEQQPQQSAPPQPQLQQSQQNTDNSRKPIVAPPTPTIQ</sequence>
<reference key="1">
    <citation type="journal article" date="2005" name="Nature">
        <title>The genome of the social amoeba Dictyostelium discoideum.</title>
        <authorList>
            <person name="Eichinger L."/>
            <person name="Pachebat J.A."/>
            <person name="Gloeckner G."/>
            <person name="Rajandream M.A."/>
            <person name="Sucgang R."/>
            <person name="Berriman M."/>
            <person name="Song J."/>
            <person name="Olsen R."/>
            <person name="Szafranski K."/>
            <person name="Xu Q."/>
            <person name="Tunggal B."/>
            <person name="Kummerfeld S."/>
            <person name="Madera M."/>
            <person name="Konfortov B.A."/>
            <person name="Rivero F."/>
            <person name="Bankier A.T."/>
            <person name="Lehmann R."/>
            <person name="Hamlin N."/>
            <person name="Davies R."/>
            <person name="Gaudet P."/>
            <person name="Fey P."/>
            <person name="Pilcher K."/>
            <person name="Chen G."/>
            <person name="Saunders D."/>
            <person name="Sodergren E.J."/>
            <person name="Davis P."/>
            <person name="Kerhornou A."/>
            <person name="Nie X."/>
            <person name="Hall N."/>
            <person name="Anjard C."/>
            <person name="Hemphill L."/>
            <person name="Bason N."/>
            <person name="Farbrother P."/>
            <person name="Desany B."/>
            <person name="Just E."/>
            <person name="Morio T."/>
            <person name="Rost R."/>
            <person name="Churcher C.M."/>
            <person name="Cooper J."/>
            <person name="Haydock S."/>
            <person name="van Driessche N."/>
            <person name="Cronin A."/>
            <person name="Goodhead I."/>
            <person name="Muzny D.M."/>
            <person name="Mourier T."/>
            <person name="Pain A."/>
            <person name="Lu M."/>
            <person name="Harper D."/>
            <person name="Lindsay R."/>
            <person name="Hauser H."/>
            <person name="James K.D."/>
            <person name="Quiles M."/>
            <person name="Madan Babu M."/>
            <person name="Saito T."/>
            <person name="Buchrieser C."/>
            <person name="Wardroper A."/>
            <person name="Felder M."/>
            <person name="Thangavelu M."/>
            <person name="Johnson D."/>
            <person name="Knights A."/>
            <person name="Loulseged H."/>
            <person name="Mungall K.L."/>
            <person name="Oliver K."/>
            <person name="Price C."/>
            <person name="Quail M.A."/>
            <person name="Urushihara H."/>
            <person name="Hernandez J."/>
            <person name="Rabbinowitsch E."/>
            <person name="Steffen D."/>
            <person name="Sanders M."/>
            <person name="Ma J."/>
            <person name="Kohara Y."/>
            <person name="Sharp S."/>
            <person name="Simmonds M.N."/>
            <person name="Spiegler S."/>
            <person name="Tivey A."/>
            <person name="Sugano S."/>
            <person name="White B."/>
            <person name="Walker D."/>
            <person name="Woodward J.R."/>
            <person name="Winckler T."/>
            <person name="Tanaka Y."/>
            <person name="Shaulsky G."/>
            <person name="Schleicher M."/>
            <person name="Weinstock G.M."/>
            <person name="Rosenthal A."/>
            <person name="Cox E.C."/>
            <person name="Chisholm R.L."/>
            <person name="Gibbs R.A."/>
            <person name="Loomis W.F."/>
            <person name="Platzer M."/>
            <person name="Kay R.R."/>
            <person name="Williams J.G."/>
            <person name="Dear P.H."/>
            <person name="Noegel A.A."/>
            <person name="Barrell B.G."/>
            <person name="Kuspa A."/>
        </authorList>
    </citation>
    <scope>NUCLEOTIDE SEQUENCE [LARGE SCALE GENOMIC DNA]</scope>
    <source>
        <strain>AX4</strain>
    </source>
</reference>
<protein>
    <recommendedName>
        <fullName>Putative uncharacterized protein DDB_G0282269</fullName>
    </recommendedName>
</protein>
<feature type="chain" id="PRO_0000351249" description="Putative uncharacterized protein DDB_G0282269">
    <location>
        <begin position="1"/>
        <end position="269"/>
    </location>
</feature>
<feature type="region of interest" description="Disordered" evidence="1">
    <location>
        <begin position="1"/>
        <end position="110"/>
    </location>
</feature>
<feature type="region of interest" description="Disordered" evidence="1">
    <location>
        <begin position="157"/>
        <end position="269"/>
    </location>
</feature>
<feature type="compositionally biased region" description="Pro residues" evidence="1">
    <location>
        <begin position="1"/>
        <end position="16"/>
    </location>
</feature>
<feature type="compositionally biased region" description="Polar residues" evidence="1">
    <location>
        <begin position="21"/>
        <end position="45"/>
    </location>
</feature>
<feature type="compositionally biased region" description="Low complexity" evidence="1">
    <location>
        <begin position="46"/>
        <end position="58"/>
    </location>
</feature>
<feature type="compositionally biased region" description="Polar residues" evidence="1">
    <location>
        <begin position="80"/>
        <end position="93"/>
    </location>
</feature>
<feature type="compositionally biased region" description="Low complexity" evidence="1">
    <location>
        <begin position="159"/>
        <end position="181"/>
    </location>
</feature>
<feature type="compositionally biased region" description="Polar residues" evidence="1">
    <location>
        <begin position="182"/>
        <end position="195"/>
    </location>
</feature>
<feature type="compositionally biased region" description="Pro residues" evidence="1">
    <location>
        <begin position="198"/>
        <end position="213"/>
    </location>
</feature>
<name>Y5306_DICDI</name>